<gene>
    <name evidence="1" type="primary">nuoH</name>
    <name type="ordered locus">ELI_06630</name>
</gene>
<evidence type="ECO:0000255" key="1">
    <source>
        <dbReference type="HAMAP-Rule" id="MF_01350"/>
    </source>
</evidence>
<sequence>MTEFFQTLGMNYEWAWFTATIAGILLIALPVMLAVAMVIYVDRKVLGAIMLRRGPNVVGPFGLLQSFADGLKVFLQETIIPSAANKGIFLLAPIVTFVVALVAWAVIPFGDGMVLADINVGLLYVLAISSLGVYGIVMAGWASNSKYPFFSAMRAAAQMISYEVSIGFILICVVLWAGTFNLSEIVEAQRGHGLGIVNGYFFNILLFPMWVLFFISCLAETQRAPFDLTEAESELVAGYQTEYSSMSFALFWLGEYANILLLCSLNTVLFFGGWLPPIDWAPLYYVPGFLWFLIKTFLFFFMFSWIWATVPRYRYDQLMRLGWKVFLPMSLLFVFLISGYLMATGHYG</sequence>
<organism>
    <name type="scientific">Erythrobacter litoralis (strain HTCC2594)</name>
    <dbReference type="NCBI Taxonomy" id="314225"/>
    <lineage>
        <taxon>Bacteria</taxon>
        <taxon>Pseudomonadati</taxon>
        <taxon>Pseudomonadota</taxon>
        <taxon>Alphaproteobacteria</taxon>
        <taxon>Sphingomonadales</taxon>
        <taxon>Erythrobacteraceae</taxon>
        <taxon>Erythrobacter/Porphyrobacter group</taxon>
        <taxon>Erythrobacter</taxon>
    </lineage>
</organism>
<name>NUOH_ERYLH</name>
<reference key="1">
    <citation type="journal article" date="2009" name="J. Bacteriol.">
        <title>Complete genome sequence of Erythrobacter litoralis HTCC2594.</title>
        <authorList>
            <person name="Oh H.M."/>
            <person name="Giovannoni S.J."/>
            <person name="Ferriera S."/>
            <person name="Johnson J."/>
            <person name="Cho J.C."/>
        </authorList>
    </citation>
    <scope>NUCLEOTIDE SEQUENCE [LARGE SCALE GENOMIC DNA]</scope>
    <source>
        <strain>HTCC2594</strain>
    </source>
</reference>
<keyword id="KW-0997">Cell inner membrane</keyword>
<keyword id="KW-1003">Cell membrane</keyword>
<keyword id="KW-0472">Membrane</keyword>
<keyword id="KW-0520">NAD</keyword>
<keyword id="KW-0874">Quinone</keyword>
<keyword id="KW-1185">Reference proteome</keyword>
<keyword id="KW-1278">Translocase</keyword>
<keyword id="KW-0812">Transmembrane</keyword>
<keyword id="KW-1133">Transmembrane helix</keyword>
<keyword id="KW-0830">Ubiquinone</keyword>
<protein>
    <recommendedName>
        <fullName evidence="1">NADH-quinone oxidoreductase subunit H</fullName>
        <ecNumber evidence="1">7.1.1.-</ecNumber>
    </recommendedName>
    <alternativeName>
        <fullName evidence="1">NADH dehydrogenase I subunit H</fullName>
    </alternativeName>
    <alternativeName>
        <fullName evidence="1">NDH-1 subunit H</fullName>
    </alternativeName>
</protein>
<dbReference type="EC" id="7.1.1.-" evidence="1"/>
<dbReference type="EMBL" id="CP000157">
    <property type="protein sequence ID" value="ABC63418.1"/>
    <property type="molecule type" value="Genomic_DNA"/>
</dbReference>
<dbReference type="RefSeq" id="WP_011414254.1">
    <property type="nucleotide sequence ID" value="NC_007722.1"/>
</dbReference>
<dbReference type="SMR" id="Q2NA73"/>
<dbReference type="STRING" id="314225.ELI_06630"/>
<dbReference type="KEGG" id="eli:ELI_06630"/>
<dbReference type="eggNOG" id="COG1005">
    <property type="taxonomic scope" value="Bacteria"/>
</dbReference>
<dbReference type="HOGENOM" id="CLU_015134_0_1_5"/>
<dbReference type="OrthoDB" id="9803734at2"/>
<dbReference type="Proteomes" id="UP000008808">
    <property type="component" value="Chromosome"/>
</dbReference>
<dbReference type="GO" id="GO:0005886">
    <property type="term" value="C:plasma membrane"/>
    <property type="evidence" value="ECO:0007669"/>
    <property type="project" value="UniProtKB-SubCell"/>
</dbReference>
<dbReference type="GO" id="GO:0003954">
    <property type="term" value="F:NADH dehydrogenase activity"/>
    <property type="evidence" value="ECO:0007669"/>
    <property type="project" value="TreeGrafter"/>
</dbReference>
<dbReference type="GO" id="GO:0016655">
    <property type="term" value="F:oxidoreductase activity, acting on NAD(P)H, quinone or similar compound as acceptor"/>
    <property type="evidence" value="ECO:0007669"/>
    <property type="project" value="UniProtKB-UniRule"/>
</dbReference>
<dbReference type="GO" id="GO:0048038">
    <property type="term" value="F:quinone binding"/>
    <property type="evidence" value="ECO:0007669"/>
    <property type="project" value="UniProtKB-KW"/>
</dbReference>
<dbReference type="GO" id="GO:0009060">
    <property type="term" value="P:aerobic respiration"/>
    <property type="evidence" value="ECO:0007669"/>
    <property type="project" value="TreeGrafter"/>
</dbReference>
<dbReference type="HAMAP" id="MF_01350">
    <property type="entry name" value="NDH1_NuoH"/>
    <property type="match status" value="1"/>
</dbReference>
<dbReference type="InterPro" id="IPR001694">
    <property type="entry name" value="NADH_UbQ_OxRdtase_su1/FPO"/>
</dbReference>
<dbReference type="InterPro" id="IPR018086">
    <property type="entry name" value="NADH_UbQ_OxRdtase_su1_CS"/>
</dbReference>
<dbReference type="NCBIfam" id="NF004741">
    <property type="entry name" value="PRK06076.1-2"/>
    <property type="match status" value="1"/>
</dbReference>
<dbReference type="NCBIfam" id="NF004745">
    <property type="entry name" value="PRK06076.1-6"/>
    <property type="match status" value="1"/>
</dbReference>
<dbReference type="PANTHER" id="PTHR11432">
    <property type="entry name" value="NADH DEHYDROGENASE SUBUNIT 1"/>
    <property type="match status" value="1"/>
</dbReference>
<dbReference type="PANTHER" id="PTHR11432:SF3">
    <property type="entry name" value="NADH-UBIQUINONE OXIDOREDUCTASE CHAIN 1"/>
    <property type="match status" value="1"/>
</dbReference>
<dbReference type="Pfam" id="PF00146">
    <property type="entry name" value="NADHdh"/>
    <property type="match status" value="1"/>
</dbReference>
<dbReference type="PROSITE" id="PS00668">
    <property type="entry name" value="COMPLEX1_ND1_2"/>
    <property type="match status" value="1"/>
</dbReference>
<feature type="chain" id="PRO_0000298808" description="NADH-quinone oxidoreductase subunit H">
    <location>
        <begin position="1"/>
        <end position="348"/>
    </location>
</feature>
<feature type="transmembrane region" description="Helical" evidence="1">
    <location>
        <begin position="21"/>
        <end position="41"/>
    </location>
</feature>
<feature type="transmembrane region" description="Helical" evidence="1">
    <location>
        <begin position="87"/>
        <end position="107"/>
    </location>
</feature>
<feature type="transmembrane region" description="Helical" evidence="1">
    <location>
        <begin position="120"/>
        <end position="140"/>
    </location>
</feature>
<feature type="transmembrane region" description="Helical" evidence="1">
    <location>
        <begin position="166"/>
        <end position="186"/>
    </location>
</feature>
<feature type="transmembrane region" description="Helical" evidence="1">
    <location>
        <begin position="195"/>
        <end position="215"/>
    </location>
</feature>
<feature type="transmembrane region" description="Helical" evidence="1">
    <location>
        <begin position="258"/>
        <end position="278"/>
    </location>
</feature>
<feature type="transmembrane region" description="Helical" evidence="1">
    <location>
        <begin position="288"/>
        <end position="308"/>
    </location>
</feature>
<feature type="transmembrane region" description="Helical" evidence="1">
    <location>
        <begin position="325"/>
        <end position="345"/>
    </location>
</feature>
<accession>Q2NA73</accession>
<proteinExistence type="inferred from homology"/>
<comment type="function">
    <text evidence="1">NDH-1 shuttles electrons from NADH, via FMN and iron-sulfur (Fe-S) centers, to quinones in the respiratory chain. The immediate electron acceptor for the enzyme in this species is believed to be ubiquinone. Couples the redox reaction to proton translocation (for every two electrons transferred, four hydrogen ions are translocated across the cytoplasmic membrane), and thus conserves the redox energy in a proton gradient. This subunit may bind ubiquinone.</text>
</comment>
<comment type="catalytic activity">
    <reaction evidence="1">
        <text>a quinone + NADH + 5 H(+)(in) = a quinol + NAD(+) + 4 H(+)(out)</text>
        <dbReference type="Rhea" id="RHEA:57888"/>
        <dbReference type="ChEBI" id="CHEBI:15378"/>
        <dbReference type="ChEBI" id="CHEBI:24646"/>
        <dbReference type="ChEBI" id="CHEBI:57540"/>
        <dbReference type="ChEBI" id="CHEBI:57945"/>
        <dbReference type="ChEBI" id="CHEBI:132124"/>
    </reaction>
</comment>
<comment type="subunit">
    <text evidence="1">NDH-1 is composed of 14 different subunits. Subunits NuoA, H, J, K, L, M, N constitute the membrane sector of the complex.</text>
</comment>
<comment type="subcellular location">
    <subcellularLocation>
        <location evidence="1">Cell inner membrane</location>
        <topology evidence="1">Multi-pass membrane protein</topology>
    </subcellularLocation>
</comment>
<comment type="similarity">
    <text evidence="1">Belongs to the complex I subunit 1 family.</text>
</comment>